<sequence>MDLFNYSRRETSEVNIGAVPLGGPNPIRIQSMTNTPTQDTEACVAQAKRIVDAGGEYVRLTTQGVKEAENLMNINIGLRSTGYMVPLVADVHFNPKVADVAAQYAEKVRINPGNYVDPGRTFKQLEYTDEEYAAELQKIRDRFVPFLNICKENHTAVRIGVNHGSLSDRIMSRYGDTPEGMVESCMEFLRICVDEKFTDVVISIKASNTVVMVKTVRLLVSVMEQEGMSFPLHLGVTEAGDGEDGRIKSALGIGALLADGLGDTIRVSLSEEPEAEIPVARKLVDYITSRRNHPYIPGMEAPDFNYLSPVRRKTRPVRNIGGDHLPVVLADRMDGRMETHPQFTPDYIYAGRALPEQTEPGVQYILDADVWKGEPDTWPAFNYAQLELMETCAAELKFLFTPYMALTREVVACLKQHPEAVVVSQSNHPNRVGEHRALAHQLTVEGLQNPVIFFQHYAEDTAEDLQIKAGADMGALIFDGLCDGIYLFNQGKLSHAVIDATAFGILQAGRIRTSKTEYISCPGCGRTLFNLQSTIARVKEATSHLKGLKIGIMGCIVNGPGEMADADYGYVGAGRGKISLYKQKECIEKNIPEEEAVEKLIELIKANGDYEEKTSSLSSPKEKEDK</sequence>
<gene>
    <name evidence="1" type="primary">ispG</name>
    <name type="ordered locus">BF4164</name>
</gene>
<accession>Q5L7W2</accession>
<feature type="chain" id="PRO_0000190531" description="4-hydroxy-3-methylbut-2-en-1-yl diphosphate synthase (flavodoxin)">
    <location>
        <begin position="1"/>
        <end position="626"/>
    </location>
</feature>
<feature type="binding site" evidence="1">
    <location>
        <position position="521"/>
    </location>
    <ligand>
        <name>[4Fe-4S] cluster</name>
        <dbReference type="ChEBI" id="CHEBI:49883"/>
    </ligand>
</feature>
<feature type="binding site" evidence="1">
    <location>
        <position position="524"/>
    </location>
    <ligand>
        <name>[4Fe-4S] cluster</name>
        <dbReference type="ChEBI" id="CHEBI:49883"/>
    </ligand>
</feature>
<feature type="binding site" evidence="1">
    <location>
        <position position="555"/>
    </location>
    <ligand>
        <name>[4Fe-4S] cluster</name>
        <dbReference type="ChEBI" id="CHEBI:49883"/>
    </ligand>
</feature>
<feature type="binding site" evidence="1">
    <location>
        <position position="562"/>
    </location>
    <ligand>
        <name>[4Fe-4S] cluster</name>
        <dbReference type="ChEBI" id="CHEBI:49883"/>
    </ligand>
</feature>
<proteinExistence type="inferred from homology"/>
<keyword id="KW-0004">4Fe-4S</keyword>
<keyword id="KW-0408">Iron</keyword>
<keyword id="KW-0411">Iron-sulfur</keyword>
<keyword id="KW-0414">Isoprene biosynthesis</keyword>
<keyword id="KW-0479">Metal-binding</keyword>
<keyword id="KW-0560">Oxidoreductase</keyword>
<reference key="1">
    <citation type="journal article" date="2005" name="Science">
        <title>Extensive DNA inversions in the B. fragilis genome control variable gene expression.</title>
        <authorList>
            <person name="Cerdeno-Tarraga A.-M."/>
            <person name="Patrick S."/>
            <person name="Crossman L.C."/>
            <person name="Blakely G."/>
            <person name="Abratt V."/>
            <person name="Lennard N."/>
            <person name="Poxton I."/>
            <person name="Duerden B."/>
            <person name="Harris B."/>
            <person name="Quail M.A."/>
            <person name="Barron A."/>
            <person name="Clark L."/>
            <person name="Corton C."/>
            <person name="Doggett J."/>
            <person name="Holden M.T.G."/>
            <person name="Larke N."/>
            <person name="Line A."/>
            <person name="Lord A."/>
            <person name="Norbertczak H."/>
            <person name="Ormond D."/>
            <person name="Price C."/>
            <person name="Rabbinowitsch E."/>
            <person name="Woodward J."/>
            <person name="Barrell B.G."/>
            <person name="Parkhill J."/>
        </authorList>
    </citation>
    <scope>NUCLEOTIDE SEQUENCE [LARGE SCALE GENOMIC DNA]</scope>
    <source>
        <strain>ATCC 25285 / DSM 2151 / CCUG 4856 / JCM 11019 / LMG 10263 / NCTC 9343 / Onslow / VPI 2553 / EN-2</strain>
    </source>
</reference>
<protein>
    <recommendedName>
        <fullName evidence="1">4-hydroxy-3-methylbut-2-en-1-yl diphosphate synthase (flavodoxin)</fullName>
        <ecNumber evidence="1">1.17.7.3</ecNumber>
    </recommendedName>
    <alternativeName>
        <fullName evidence="1">1-hydroxy-2-methyl-2-(E)-butenyl 4-diphosphate synthase</fullName>
    </alternativeName>
</protein>
<comment type="function">
    <text evidence="1">Converts 2C-methyl-D-erythritol 2,4-cyclodiphosphate (ME-2,4cPP) into 1-hydroxy-2-methyl-2-(E)-butenyl 4-diphosphate.</text>
</comment>
<comment type="catalytic activity">
    <reaction evidence="1">
        <text>(2E)-4-hydroxy-3-methylbut-2-enyl diphosphate + oxidized [flavodoxin] + H2O + 2 H(+) = 2-C-methyl-D-erythritol 2,4-cyclic diphosphate + reduced [flavodoxin]</text>
        <dbReference type="Rhea" id="RHEA:43604"/>
        <dbReference type="Rhea" id="RHEA-COMP:10622"/>
        <dbReference type="Rhea" id="RHEA-COMP:10623"/>
        <dbReference type="ChEBI" id="CHEBI:15377"/>
        <dbReference type="ChEBI" id="CHEBI:15378"/>
        <dbReference type="ChEBI" id="CHEBI:57618"/>
        <dbReference type="ChEBI" id="CHEBI:58210"/>
        <dbReference type="ChEBI" id="CHEBI:58483"/>
        <dbReference type="ChEBI" id="CHEBI:128753"/>
        <dbReference type="EC" id="1.17.7.3"/>
    </reaction>
</comment>
<comment type="cofactor">
    <cofactor evidence="1">
        <name>[4Fe-4S] cluster</name>
        <dbReference type="ChEBI" id="CHEBI:49883"/>
    </cofactor>
    <text evidence="1">Binds 1 [4Fe-4S] cluster.</text>
</comment>
<comment type="pathway">
    <text evidence="1">Isoprenoid biosynthesis; isopentenyl diphosphate biosynthesis via DXP pathway; isopentenyl diphosphate from 1-deoxy-D-xylulose 5-phosphate: step 5/6.</text>
</comment>
<comment type="similarity">
    <text evidence="1">Belongs to the IspG family.</text>
</comment>
<dbReference type="EC" id="1.17.7.3" evidence="1"/>
<dbReference type="EMBL" id="CR626927">
    <property type="protein sequence ID" value="CAH09837.1"/>
    <property type="molecule type" value="Genomic_DNA"/>
</dbReference>
<dbReference type="RefSeq" id="WP_010993733.1">
    <property type="nucleotide sequence ID" value="NZ_UFTH01000001.1"/>
</dbReference>
<dbReference type="SMR" id="Q5L7W2"/>
<dbReference type="PaxDb" id="272559-BF9343_4056"/>
<dbReference type="KEGG" id="bfs:BF9343_4056"/>
<dbReference type="eggNOG" id="COG0821">
    <property type="taxonomic scope" value="Bacteria"/>
</dbReference>
<dbReference type="HOGENOM" id="CLU_012689_0_0_10"/>
<dbReference type="UniPathway" id="UPA00056">
    <property type="reaction ID" value="UER00096"/>
</dbReference>
<dbReference type="Proteomes" id="UP000006731">
    <property type="component" value="Chromosome"/>
</dbReference>
<dbReference type="GO" id="GO:0051539">
    <property type="term" value="F:4 iron, 4 sulfur cluster binding"/>
    <property type="evidence" value="ECO:0007669"/>
    <property type="project" value="UniProtKB-UniRule"/>
</dbReference>
<dbReference type="GO" id="GO:0046429">
    <property type="term" value="F:4-hydroxy-3-methylbut-2-en-1-yl diphosphate synthase activity (ferredoxin)"/>
    <property type="evidence" value="ECO:0007669"/>
    <property type="project" value="UniProtKB-UniRule"/>
</dbReference>
<dbReference type="GO" id="GO:0141197">
    <property type="term" value="F:4-hydroxy-3-methylbut-2-enyl-diphosphate synthase activity (flavodoxin)"/>
    <property type="evidence" value="ECO:0007669"/>
    <property type="project" value="UniProtKB-EC"/>
</dbReference>
<dbReference type="GO" id="GO:0005506">
    <property type="term" value="F:iron ion binding"/>
    <property type="evidence" value="ECO:0007669"/>
    <property type="project" value="InterPro"/>
</dbReference>
<dbReference type="GO" id="GO:0019288">
    <property type="term" value="P:isopentenyl diphosphate biosynthetic process, methylerythritol 4-phosphate pathway"/>
    <property type="evidence" value="ECO:0007669"/>
    <property type="project" value="UniProtKB-UniRule"/>
</dbReference>
<dbReference type="GO" id="GO:0016114">
    <property type="term" value="P:terpenoid biosynthetic process"/>
    <property type="evidence" value="ECO:0007669"/>
    <property type="project" value="InterPro"/>
</dbReference>
<dbReference type="FunFam" id="3.20.20.20:FF:000005">
    <property type="entry name" value="4-hydroxy-3-methylbut-2-en-1-yl diphosphate synthase (flavodoxin)"/>
    <property type="match status" value="1"/>
</dbReference>
<dbReference type="FunFam" id="3.30.413.10:FF:000006">
    <property type="entry name" value="4-hydroxy-3-methylbut-2-en-1-yl diphosphate synthase (flavodoxin)"/>
    <property type="match status" value="1"/>
</dbReference>
<dbReference type="Gene3D" id="3.20.20.20">
    <property type="entry name" value="Dihydropteroate synthase-like"/>
    <property type="match status" value="1"/>
</dbReference>
<dbReference type="Gene3D" id="3.30.413.10">
    <property type="entry name" value="Sulfite Reductase Hemoprotein, domain 1"/>
    <property type="match status" value="1"/>
</dbReference>
<dbReference type="HAMAP" id="MF_00159">
    <property type="entry name" value="IspG"/>
    <property type="match status" value="1"/>
</dbReference>
<dbReference type="InterPro" id="IPR011005">
    <property type="entry name" value="Dihydropteroate_synth-like_sf"/>
</dbReference>
<dbReference type="InterPro" id="IPR017178">
    <property type="entry name" value="IspG_atypical"/>
</dbReference>
<dbReference type="InterPro" id="IPR004588">
    <property type="entry name" value="IspG_bac-typ"/>
</dbReference>
<dbReference type="InterPro" id="IPR045854">
    <property type="entry name" value="NO2/SO3_Rdtase_4Fe4S_sf"/>
</dbReference>
<dbReference type="NCBIfam" id="TIGR00612">
    <property type="entry name" value="ispG_gcpE"/>
    <property type="match status" value="1"/>
</dbReference>
<dbReference type="NCBIfam" id="NF002534">
    <property type="entry name" value="PRK02048.1"/>
    <property type="match status" value="1"/>
</dbReference>
<dbReference type="PANTHER" id="PTHR30454">
    <property type="entry name" value="4-HYDROXY-3-METHYLBUT-2-EN-1-YL DIPHOSPHATE SYNTHASE"/>
    <property type="match status" value="1"/>
</dbReference>
<dbReference type="PANTHER" id="PTHR30454:SF0">
    <property type="entry name" value="4-HYDROXY-3-METHYLBUT-2-EN-1-YL DIPHOSPHATE SYNTHASE (FERREDOXIN), CHLOROPLASTIC"/>
    <property type="match status" value="1"/>
</dbReference>
<dbReference type="Pfam" id="PF04551">
    <property type="entry name" value="GcpE"/>
    <property type="match status" value="2"/>
</dbReference>
<dbReference type="PIRSF" id="PIRSF037336">
    <property type="entry name" value="IspG_like"/>
    <property type="match status" value="1"/>
</dbReference>
<dbReference type="SUPFAM" id="SSF56014">
    <property type="entry name" value="Nitrite and sulphite reductase 4Fe-4S domain-like"/>
    <property type="match status" value="1"/>
</dbReference>
<evidence type="ECO:0000255" key="1">
    <source>
        <dbReference type="HAMAP-Rule" id="MF_00159"/>
    </source>
</evidence>
<organism>
    <name type="scientific">Bacteroides fragilis (strain ATCC 25285 / DSM 2151 / CCUG 4856 / JCM 11019 / LMG 10263 / NCTC 9343 / Onslow / VPI 2553 / EN-2)</name>
    <dbReference type="NCBI Taxonomy" id="272559"/>
    <lineage>
        <taxon>Bacteria</taxon>
        <taxon>Pseudomonadati</taxon>
        <taxon>Bacteroidota</taxon>
        <taxon>Bacteroidia</taxon>
        <taxon>Bacteroidales</taxon>
        <taxon>Bacteroidaceae</taxon>
        <taxon>Bacteroides</taxon>
    </lineage>
</organism>
<name>ISPG_BACFN</name>